<gene>
    <name type="ordered locus">CTL0869</name>
</gene>
<protein>
    <recommendedName>
        <fullName evidence="1">dITP/XTP pyrophosphatase</fullName>
        <ecNumber evidence="1">3.6.1.66</ecNumber>
    </recommendedName>
    <alternativeName>
        <fullName evidence="1">Non-canonical purine NTP pyrophosphatase</fullName>
    </alternativeName>
    <alternativeName>
        <fullName evidence="1">Non-standard purine NTP pyrophosphatase</fullName>
    </alternativeName>
    <alternativeName>
        <fullName evidence="1">Nucleoside-triphosphate diphosphatase</fullName>
    </alternativeName>
    <alternativeName>
        <fullName evidence="1">Nucleoside-triphosphate pyrophosphatase</fullName>
        <shortName evidence="1">NTPase</shortName>
    </alternativeName>
</protein>
<proteinExistence type="inferred from homology"/>
<name>IXTPA_CHLT2</name>
<comment type="function">
    <text evidence="1">Pyrophosphatase that catalyzes the hydrolysis of nucleoside triphosphates to their monophosphate derivatives, with a high preference for the non-canonical purine nucleotides XTP (xanthosine triphosphate), dITP (deoxyinosine triphosphate) and ITP. Seems to function as a house-cleaning enzyme that removes non-canonical purine nucleotides from the nucleotide pool, thus preventing their incorporation into DNA/RNA and avoiding chromosomal lesions.</text>
</comment>
<comment type="catalytic activity">
    <reaction evidence="1">
        <text>XTP + H2O = XMP + diphosphate + H(+)</text>
        <dbReference type="Rhea" id="RHEA:28610"/>
        <dbReference type="ChEBI" id="CHEBI:15377"/>
        <dbReference type="ChEBI" id="CHEBI:15378"/>
        <dbReference type="ChEBI" id="CHEBI:33019"/>
        <dbReference type="ChEBI" id="CHEBI:57464"/>
        <dbReference type="ChEBI" id="CHEBI:61314"/>
        <dbReference type="EC" id="3.6.1.66"/>
    </reaction>
</comment>
<comment type="catalytic activity">
    <reaction evidence="1">
        <text>dITP + H2O = dIMP + diphosphate + H(+)</text>
        <dbReference type="Rhea" id="RHEA:28342"/>
        <dbReference type="ChEBI" id="CHEBI:15377"/>
        <dbReference type="ChEBI" id="CHEBI:15378"/>
        <dbReference type="ChEBI" id="CHEBI:33019"/>
        <dbReference type="ChEBI" id="CHEBI:61194"/>
        <dbReference type="ChEBI" id="CHEBI:61382"/>
        <dbReference type="EC" id="3.6.1.66"/>
    </reaction>
</comment>
<comment type="catalytic activity">
    <reaction evidence="1">
        <text>ITP + H2O = IMP + diphosphate + H(+)</text>
        <dbReference type="Rhea" id="RHEA:29399"/>
        <dbReference type="ChEBI" id="CHEBI:15377"/>
        <dbReference type="ChEBI" id="CHEBI:15378"/>
        <dbReference type="ChEBI" id="CHEBI:33019"/>
        <dbReference type="ChEBI" id="CHEBI:58053"/>
        <dbReference type="ChEBI" id="CHEBI:61402"/>
        <dbReference type="EC" id="3.6.1.66"/>
    </reaction>
</comment>
<comment type="cofactor">
    <cofactor evidence="1">
        <name>Mg(2+)</name>
        <dbReference type="ChEBI" id="CHEBI:18420"/>
    </cofactor>
    <text evidence="1">Binds 1 Mg(2+) ion per subunit.</text>
</comment>
<comment type="subunit">
    <text evidence="1">Homodimer.</text>
</comment>
<comment type="similarity">
    <text evidence="1">Belongs to the HAM1 NTPase family.</text>
</comment>
<evidence type="ECO:0000255" key="1">
    <source>
        <dbReference type="HAMAP-Rule" id="MF_01405"/>
    </source>
</evidence>
<keyword id="KW-0378">Hydrolase</keyword>
<keyword id="KW-0460">Magnesium</keyword>
<keyword id="KW-0479">Metal-binding</keyword>
<keyword id="KW-0546">Nucleotide metabolism</keyword>
<keyword id="KW-0547">Nucleotide-binding</keyword>
<feature type="chain" id="PRO_1000145484" description="dITP/XTP pyrophosphatase">
    <location>
        <begin position="1"/>
        <end position="209"/>
    </location>
</feature>
<feature type="active site" description="Proton acceptor" evidence="1">
    <location>
        <position position="70"/>
    </location>
</feature>
<feature type="binding site" evidence="1">
    <location>
        <begin position="7"/>
        <end position="12"/>
    </location>
    <ligand>
        <name>substrate</name>
    </ligand>
</feature>
<feature type="binding site" evidence="1">
    <location>
        <position position="70"/>
    </location>
    <ligand>
        <name>Mg(2+)</name>
        <dbReference type="ChEBI" id="CHEBI:18420"/>
    </ligand>
</feature>
<feature type="binding site" evidence="1">
    <location>
        <position position="71"/>
    </location>
    <ligand>
        <name>substrate</name>
    </ligand>
</feature>
<feature type="binding site" evidence="1">
    <location>
        <begin position="154"/>
        <end position="157"/>
    </location>
    <ligand>
        <name>substrate</name>
    </ligand>
</feature>
<feature type="binding site" evidence="1">
    <location>
        <position position="177"/>
    </location>
    <ligand>
        <name>substrate</name>
    </ligand>
</feature>
<feature type="binding site" evidence="1">
    <location>
        <begin position="182"/>
        <end position="183"/>
    </location>
    <ligand>
        <name>substrate</name>
    </ligand>
</feature>
<sequence>MKILIASSHGYKVRETKAFLKKLGEFDIFSLVDYPSYQPPKETGETPEENAIQKGLFAAQTFRCWTIADDSMLIIPALGGLPGKLSASFAGEQANDKDHRKKLLENMRLLENTIDRSAYFECCVALISPFGKIFKAHASCEGTIAFEERGSSGFGYDPLFVKHDYKQTYAELPEAIKNQVSHRAKALVKLQPYVETVLANHLLAGKESL</sequence>
<accession>B0B8I0</accession>
<dbReference type="EC" id="3.6.1.66" evidence="1"/>
<dbReference type="EMBL" id="AM884176">
    <property type="protein sequence ID" value="CAP04306.1"/>
    <property type="molecule type" value="Genomic_DNA"/>
</dbReference>
<dbReference type="RefSeq" id="WP_009873939.1">
    <property type="nucleotide sequence ID" value="NC_010287.1"/>
</dbReference>
<dbReference type="RefSeq" id="YP_001654938.1">
    <property type="nucleotide sequence ID" value="NC_010287.1"/>
</dbReference>
<dbReference type="SMR" id="B0B8I0"/>
<dbReference type="KEGG" id="ctb:CTL0869"/>
<dbReference type="PATRIC" id="fig|471472.4.peg.932"/>
<dbReference type="HOGENOM" id="CLU_082080_0_2_0"/>
<dbReference type="Proteomes" id="UP001154402">
    <property type="component" value="Chromosome"/>
</dbReference>
<dbReference type="GO" id="GO:0005829">
    <property type="term" value="C:cytosol"/>
    <property type="evidence" value="ECO:0007669"/>
    <property type="project" value="TreeGrafter"/>
</dbReference>
<dbReference type="GO" id="GO:0035870">
    <property type="term" value="F:dITP diphosphatase activity"/>
    <property type="evidence" value="ECO:0007669"/>
    <property type="project" value="RHEA"/>
</dbReference>
<dbReference type="GO" id="GO:0036220">
    <property type="term" value="F:ITP diphosphatase activity"/>
    <property type="evidence" value="ECO:0007669"/>
    <property type="project" value="UniProtKB-EC"/>
</dbReference>
<dbReference type="GO" id="GO:0046872">
    <property type="term" value="F:metal ion binding"/>
    <property type="evidence" value="ECO:0007669"/>
    <property type="project" value="UniProtKB-KW"/>
</dbReference>
<dbReference type="GO" id="GO:0000166">
    <property type="term" value="F:nucleotide binding"/>
    <property type="evidence" value="ECO:0007669"/>
    <property type="project" value="UniProtKB-KW"/>
</dbReference>
<dbReference type="GO" id="GO:0017111">
    <property type="term" value="F:ribonucleoside triphosphate phosphatase activity"/>
    <property type="evidence" value="ECO:0007669"/>
    <property type="project" value="InterPro"/>
</dbReference>
<dbReference type="GO" id="GO:0036222">
    <property type="term" value="F:XTP diphosphatase activity"/>
    <property type="evidence" value="ECO:0007669"/>
    <property type="project" value="RHEA"/>
</dbReference>
<dbReference type="GO" id="GO:0009117">
    <property type="term" value="P:nucleotide metabolic process"/>
    <property type="evidence" value="ECO:0007669"/>
    <property type="project" value="UniProtKB-KW"/>
</dbReference>
<dbReference type="GO" id="GO:0009146">
    <property type="term" value="P:purine nucleoside triphosphate catabolic process"/>
    <property type="evidence" value="ECO:0007669"/>
    <property type="project" value="UniProtKB-UniRule"/>
</dbReference>
<dbReference type="CDD" id="cd00515">
    <property type="entry name" value="HAM1"/>
    <property type="match status" value="1"/>
</dbReference>
<dbReference type="FunFam" id="3.90.950.10:FF:000001">
    <property type="entry name" value="dITP/XTP pyrophosphatase"/>
    <property type="match status" value="1"/>
</dbReference>
<dbReference type="Gene3D" id="3.90.950.10">
    <property type="match status" value="1"/>
</dbReference>
<dbReference type="HAMAP" id="MF_01405">
    <property type="entry name" value="Non_canon_purine_NTPase"/>
    <property type="match status" value="1"/>
</dbReference>
<dbReference type="InterPro" id="IPR020922">
    <property type="entry name" value="dITP/XTP_pyrophosphatase"/>
</dbReference>
<dbReference type="InterPro" id="IPR029001">
    <property type="entry name" value="ITPase-like_fam"/>
</dbReference>
<dbReference type="InterPro" id="IPR002637">
    <property type="entry name" value="RdgB/HAM1"/>
</dbReference>
<dbReference type="PANTHER" id="PTHR11067:SF9">
    <property type="entry name" value="INOSINE TRIPHOSPHATE PYROPHOSPHATASE"/>
    <property type="match status" value="1"/>
</dbReference>
<dbReference type="PANTHER" id="PTHR11067">
    <property type="entry name" value="INOSINE TRIPHOSPHATE PYROPHOSPHATASE/HAM1 PROTEIN"/>
    <property type="match status" value="1"/>
</dbReference>
<dbReference type="Pfam" id="PF01725">
    <property type="entry name" value="Ham1p_like"/>
    <property type="match status" value="1"/>
</dbReference>
<dbReference type="SUPFAM" id="SSF52972">
    <property type="entry name" value="ITPase-like"/>
    <property type="match status" value="1"/>
</dbReference>
<reference key="1">
    <citation type="journal article" date="2008" name="Genome Res.">
        <title>Chlamydia trachomatis: genome sequence analysis of lymphogranuloma venereum isolates.</title>
        <authorList>
            <person name="Thomson N.R."/>
            <person name="Holden M.T.G."/>
            <person name="Carder C."/>
            <person name="Lennard N."/>
            <person name="Lockey S.J."/>
            <person name="Marsh P."/>
            <person name="Skipp P."/>
            <person name="O'Connor C.D."/>
            <person name="Goodhead I."/>
            <person name="Norbertzcak H."/>
            <person name="Harris B."/>
            <person name="Ormond D."/>
            <person name="Rance R."/>
            <person name="Quail M.A."/>
            <person name="Parkhill J."/>
            <person name="Stephens R.S."/>
            <person name="Clarke I.N."/>
        </authorList>
    </citation>
    <scope>NUCLEOTIDE SEQUENCE [LARGE SCALE GENOMIC DNA]</scope>
    <source>
        <strain>ATCC VR-902B / DSM 19102 / 434/Bu</strain>
    </source>
</reference>
<organism>
    <name type="scientific">Chlamydia trachomatis serovar L2 (strain ATCC VR-902B / DSM 19102 / 434/Bu)</name>
    <dbReference type="NCBI Taxonomy" id="471472"/>
    <lineage>
        <taxon>Bacteria</taxon>
        <taxon>Pseudomonadati</taxon>
        <taxon>Chlamydiota</taxon>
        <taxon>Chlamydiia</taxon>
        <taxon>Chlamydiales</taxon>
        <taxon>Chlamydiaceae</taxon>
        <taxon>Chlamydia/Chlamydophila group</taxon>
        <taxon>Chlamydia</taxon>
    </lineage>
</organism>